<gene>
    <name evidence="1" type="primary">rpsT</name>
    <name type="ordered locus">BMEI1944</name>
</gene>
<proteinExistence type="inferred from homology"/>
<comment type="function">
    <text evidence="1">Binds directly to 16S ribosomal RNA.</text>
</comment>
<comment type="similarity">
    <text evidence="1">Belongs to the bacterial ribosomal protein bS20 family.</text>
</comment>
<dbReference type="EMBL" id="AE008917">
    <property type="protein sequence ID" value="AAL53125.1"/>
    <property type="molecule type" value="Genomic_DNA"/>
</dbReference>
<dbReference type="PIR" id="AB3495">
    <property type="entry name" value="AB3495"/>
</dbReference>
<dbReference type="RefSeq" id="WP_002965247.1">
    <property type="nucleotide sequence ID" value="NZ_GG703778.1"/>
</dbReference>
<dbReference type="SMR" id="P66501"/>
<dbReference type="GeneID" id="97534562"/>
<dbReference type="KEGG" id="bme:BMEI1944"/>
<dbReference type="KEGG" id="bmel:DK63_1547"/>
<dbReference type="PATRIC" id="fig|224914.52.peg.1633"/>
<dbReference type="eggNOG" id="COG0268">
    <property type="taxonomic scope" value="Bacteria"/>
</dbReference>
<dbReference type="Proteomes" id="UP000000419">
    <property type="component" value="Chromosome I"/>
</dbReference>
<dbReference type="GO" id="GO:0015935">
    <property type="term" value="C:small ribosomal subunit"/>
    <property type="evidence" value="ECO:0007669"/>
    <property type="project" value="TreeGrafter"/>
</dbReference>
<dbReference type="GO" id="GO:0070181">
    <property type="term" value="F:small ribosomal subunit rRNA binding"/>
    <property type="evidence" value="ECO:0007669"/>
    <property type="project" value="TreeGrafter"/>
</dbReference>
<dbReference type="GO" id="GO:0003735">
    <property type="term" value="F:structural constituent of ribosome"/>
    <property type="evidence" value="ECO:0007669"/>
    <property type="project" value="InterPro"/>
</dbReference>
<dbReference type="GO" id="GO:0006412">
    <property type="term" value="P:translation"/>
    <property type="evidence" value="ECO:0007669"/>
    <property type="project" value="UniProtKB-UniRule"/>
</dbReference>
<dbReference type="FunFam" id="1.20.58.110:FF:000001">
    <property type="entry name" value="30S ribosomal protein S20"/>
    <property type="match status" value="1"/>
</dbReference>
<dbReference type="Gene3D" id="1.20.58.110">
    <property type="entry name" value="Ribosomal protein S20"/>
    <property type="match status" value="1"/>
</dbReference>
<dbReference type="HAMAP" id="MF_00500">
    <property type="entry name" value="Ribosomal_bS20"/>
    <property type="match status" value="1"/>
</dbReference>
<dbReference type="InterPro" id="IPR002583">
    <property type="entry name" value="Ribosomal_bS20"/>
</dbReference>
<dbReference type="InterPro" id="IPR036510">
    <property type="entry name" value="Ribosomal_bS20_sf"/>
</dbReference>
<dbReference type="NCBIfam" id="TIGR00029">
    <property type="entry name" value="S20"/>
    <property type="match status" value="1"/>
</dbReference>
<dbReference type="PANTHER" id="PTHR33398">
    <property type="entry name" value="30S RIBOSOMAL PROTEIN S20"/>
    <property type="match status" value="1"/>
</dbReference>
<dbReference type="PANTHER" id="PTHR33398:SF1">
    <property type="entry name" value="SMALL RIBOSOMAL SUBUNIT PROTEIN BS20C"/>
    <property type="match status" value="1"/>
</dbReference>
<dbReference type="Pfam" id="PF01649">
    <property type="entry name" value="Ribosomal_S20p"/>
    <property type="match status" value="1"/>
</dbReference>
<dbReference type="SUPFAM" id="SSF46992">
    <property type="entry name" value="Ribosomal protein S20"/>
    <property type="match status" value="1"/>
</dbReference>
<sequence>MANTPSAKKAVRKIAARTEINKSRRSRVRTFVRKLEDALLSGDKQAAEVAFKAVEPELMRAASKGVVHKNTAARKVSRLAKRVKALNA</sequence>
<keyword id="KW-0687">Ribonucleoprotein</keyword>
<keyword id="KW-0689">Ribosomal protein</keyword>
<keyword id="KW-0694">RNA-binding</keyword>
<keyword id="KW-0699">rRNA-binding</keyword>
<accession>P66501</accession>
<accession>Q8YED4</accession>
<protein>
    <recommendedName>
        <fullName evidence="1">Small ribosomal subunit protein bS20</fullName>
    </recommendedName>
    <alternativeName>
        <fullName evidence="2">30S ribosomal protein S20</fullName>
    </alternativeName>
</protein>
<name>RS20_BRUME</name>
<organism>
    <name type="scientific">Brucella melitensis biotype 1 (strain ATCC 23456 / CCUG 17765 / NCTC 10094 / 16M)</name>
    <dbReference type="NCBI Taxonomy" id="224914"/>
    <lineage>
        <taxon>Bacteria</taxon>
        <taxon>Pseudomonadati</taxon>
        <taxon>Pseudomonadota</taxon>
        <taxon>Alphaproteobacteria</taxon>
        <taxon>Hyphomicrobiales</taxon>
        <taxon>Brucellaceae</taxon>
        <taxon>Brucella/Ochrobactrum group</taxon>
        <taxon>Brucella</taxon>
    </lineage>
</organism>
<evidence type="ECO:0000255" key="1">
    <source>
        <dbReference type="HAMAP-Rule" id="MF_00500"/>
    </source>
</evidence>
<evidence type="ECO:0000305" key="2"/>
<reference key="1">
    <citation type="journal article" date="2002" name="Proc. Natl. Acad. Sci. U.S.A.">
        <title>The genome sequence of the facultative intracellular pathogen Brucella melitensis.</title>
        <authorList>
            <person name="DelVecchio V.G."/>
            <person name="Kapatral V."/>
            <person name="Redkar R.J."/>
            <person name="Patra G."/>
            <person name="Mujer C."/>
            <person name="Los T."/>
            <person name="Ivanova N."/>
            <person name="Anderson I."/>
            <person name="Bhattacharyya A."/>
            <person name="Lykidis A."/>
            <person name="Reznik G."/>
            <person name="Jablonski L."/>
            <person name="Larsen N."/>
            <person name="D'Souza M."/>
            <person name="Bernal A."/>
            <person name="Mazur M."/>
            <person name="Goltsman E."/>
            <person name="Selkov E."/>
            <person name="Elzer P.H."/>
            <person name="Hagius S."/>
            <person name="O'Callaghan D."/>
            <person name="Letesson J.-J."/>
            <person name="Haselkorn R."/>
            <person name="Kyrpides N.C."/>
            <person name="Overbeek R."/>
        </authorList>
    </citation>
    <scope>NUCLEOTIDE SEQUENCE [LARGE SCALE GENOMIC DNA]</scope>
    <source>
        <strain>ATCC 23456 / CCUG 17765 / NCTC 10094 / 16M</strain>
    </source>
</reference>
<feature type="chain" id="PRO_0000167932" description="Small ribosomal subunit protein bS20">
    <location>
        <begin position="1"/>
        <end position="88"/>
    </location>
</feature>